<accession>Q8PNV2</accession>
<proteinExistence type="inferred from homology"/>
<reference key="1">
    <citation type="journal article" date="2002" name="Nature">
        <title>Comparison of the genomes of two Xanthomonas pathogens with differing host specificities.</title>
        <authorList>
            <person name="da Silva A.C.R."/>
            <person name="Ferro J.A."/>
            <person name="Reinach F.C."/>
            <person name="Farah C.S."/>
            <person name="Furlan L.R."/>
            <person name="Quaggio R.B."/>
            <person name="Monteiro-Vitorello C.B."/>
            <person name="Van Sluys M.A."/>
            <person name="Almeida N.F. Jr."/>
            <person name="Alves L.M.C."/>
            <person name="do Amaral A.M."/>
            <person name="Bertolini M.C."/>
            <person name="Camargo L.E.A."/>
            <person name="Camarotte G."/>
            <person name="Cannavan F."/>
            <person name="Cardozo J."/>
            <person name="Chambergo F."/>
            <person name="Ciapina L.P."/>
            <person name="Cicarelli R.M.B."/>
            <person name="Coutinho L.L."/>
            <person name="Cursino-Santos J.R."/>
            <person name="El-Dorry H."/>
            <person name="Faria J.B."/>
            <person name="Ferreira A.J.S."/>
            <person name="Ferreira R.C.C."/>
            <person name="Ferro M.I.T."/>
            <person name="Formighieri E.F."/>
            <person name="Franco M.C."/>
            <person name="Greggio C.C."/>
            <person name="Gruber A."/>
            <person name="Katsuyama A.M."/>
            <person name="Kishi L.T."/>
            <person name="Leite R.P."/>
            <person name="Lemos E.G.M."/>
            <person name="Lemos M.V.F."/>
            <person name="Locali E.C."/>
            <person name="Machado M.A."/>
            <person name="Madeira A.M.B.N."/>
            <person name="Martinez-Rossi N.M."/>
            <person name="Martins E.C."/>
            <person name="Meidanis J."/>
            <person name="Menck C.F.M."/>
            <person name="Miyaki C.Y."/>
            <person name="Moon D.H."/>
            <person name="Moreira L.M."/>
            <person name="Novo M.T.M."/>
            <person name="Okura V.K."/>
            <person name="Oliveira M.C."/>
            <person name="Oliveira V.R."/>
            <person name="Pereira H.A."/>
            <person name="Rossi A."/>
            <person name="Sena J.A.D."/>
            <person name="Silva C."/>
            <person name="de Souza R.F."/>
            <person name="Spinola L.A.F."/>
            <person name="Takita M.A."/>
            <person name="Tamura R.E."/>
            <person name="Teixeira E.C."/>
            <person name="Tezza R.I.D."/>
            <person name="Trindade dos Santos M."/>
            <person name="Truffi D."/>
            <person name="Tsai S.M."/>
            <person name="White F.F."/>
            <person name="Setubal J.C."/>
            <person name="Kitajima J.P."/>
        </authorList>
    </citation>
    <scope>NUCLEOTIDE SEQUENCE [LARGE SCALE GENOMIC DNA]</scope>
    <source>
        <strain>306</strain>
    </source>
</reference>
<feature type="chain" id="PRO_0000201003" description="UPF0761 membrane protein XAC0937">
    <location>
        <begin position="1"/>
        <end position="422"/>
    </location>
</feature>
<feature type="transmembrane region" description="Helical" evidence="1">
    <location>
        <begin position="45"/>
        <end position="65"/>
    </location>
</feature>
<feature type="transmembrane region" description="Helical" evidence="1">
    <location>
        <begin position="102"/>
        <end position="122"/>
    </location>
</feature>
<feature type="transmembrane region" description="Helical" evidence="1">
    <location>
        <begin position="151"/>
        <end position="171"/>
    </location>
</feature>
<feature type="transmembrane region" description="Helical" evidence="1">
    <location>
        <begin position="179"/>
        <end position="199"/>
    </location>
</feature>
<feature type="transmembrane region" description="Helical" evidence="1">
    <location>
        <begin position="213"/>
        <end position="233"/>
    </location>
</feature>
<feature type="transmembrane region" description="Helical" evidence="1">
    <location>
        <begin position="247"/>
        <end position="267"/>
    </location>
</feature>
<gene>
    <name type="ordered locus">XAC0937</name>
</gene>
<keyword id="KW-0997">Cell inner membrane</keyword>
<keyword id="KW-1003">Cell membrane</keyword>
<keyword id="KW-0472">Membrane</keyword>
<keyword id="KW-0812">Transmembrane</keyword>
<keyword id="KW-1133">Transmembrane helix</keyword>
<evidence type="ECO:0000255" key="1">
    <source>
        <dbReference type="HAMAP-Rule" id="MF_00672"/>
    </source>
</evidence>
<sequence length="422" mass="47860">MNKLHQWKERLRDRARTVSFGRFLWRRFLDDRLFQAAASLAYTTVFALVPLAIVVFGVLSAFPAFNEWKDALTDFIFNNFVPGAARSVQNYLNRSLEDLGKFTVAGMVALVASLLITLHSIEQTFNSIWRVAAARPKVTRFLIYWTVLTLGTMLAAASMAMAAYVFALPLFRTTEGQWLAEFAWRLAPMAVEFVCIVLIYRVVPQHVVRLRHALPGALLAVILMEIVKWGFGFYLGNFQTYQRIYGALSALPILLLWIYLSWVSVLLGASLASSMSAFRYQPEAMRLPPGFEIYGLLRLLGRFSQARVHGDGLDEDRILALEPMLTDTLMQELLCELKRIRLLRRDERGQWLLARDLDVVPLAELYENCQLRVPIEDRPLPCRDDAFGQAAAAALEQLRQPLRSVLAQPVGDLYTHLPGDPP</sequence>
<name>Y937_XANAC</name>
<dbReference type="EMBL" id="AE008923">
    <property type="protein sequence ID" value="AAM35825.1"/>
    <property type="molecule type" value="Genomic_DNA"/>
</dbReference>
<dbReference type="SMR" id="Q8PNV2"/>
<dbReference type="KEGG" id="xac:XAC0937"/>
<dbReference type="eggNOG" id="COG1295">
    <property type="taxonomic scope" value="Bacteria"/>
</dbReference>
<dbReference type="HOGENOM" id="CLU_032288_1_0_6"/>
<dbReference type="Proteomes" id="UP000000576">
    <property type="component" value="Chromosome"/>
</dbReference>
<dbReference type="GO" id="GO:0005886">
    <property type="term" value="C:plasma membrane"/>
    <property type="evidence" value="ECO:0007669"/>
    <property type="project" value="UniProtKB-SubCell"/>
</dbReference>
<dbReference type="HAMAP" id="MF_00672">
    <property type="entry name" value="UPF0761"/>
    <property type="match status" value="1"/>
</dbReference>
<dbReference type="InterPro" id="IPR023679">
    <property type="entry name" value="UPF0761_bac"/>
</dbReference>
<dbReference type="InterPro" id="IPR017039">
    <property type="entry name" value="Virul_fac_BrkB"/>
</dbReference>
<dbReference type="NCBIfam" id="NF003256">
    <property type="entry name" value="PRK04214.1"/>
    <property type="match status" value="1"/>
</dbReference>
<dbReference type="NCBIfam" id="TIGR00765">
    <property type="entry name" value="yihY_not_rbn"/>
    <property type="match status" value="1"/>
</dbReference>
<dbReference type="PANTHER" id="PTHR30213">
    <property type="entry name" value="INNER MEMBRANE PROTEIN YHJD"/>
    <property type="match status" value="1"/>
</dbReference>
<dbReference type="PANTHER" id="PTHR30213:SF0">
    <property type="entry name" value="UPF0761 MEMBRANE PROTEIN YIHY"/>
    <property type="match status" value="1"/>
</dbReference>
<dbReference type="Pfam" id="PF03631">
    <property type="entry name" value="Virul_fac_BrkB"/>
    <property type="match status" value="1"/>
</dbReference>
<protein>
    <recommendedName>
        <fullName evidence="1">UPF0761 membrane protein XAC0937</fullName>
    </recommendedName>
</protein>
<organism>
    <name type="scientific">Xanthomonas axonopodis pv. citri (strain 306)</name>
    <dbReference type="NCBI Taxonomy" id="190486"/>
    <lineage>
        <taxon>Bacteria</taxon>
        <taxon>Pseudomonadati</taxon>
        <taxon>Pseudomonadota</taxon>
        <taxon>Gammaproteobacteria</taxon>
        <taxon>Lysobacterales</taxon>
        <taxon>Lysobacteraceae</taxon>
        <taxon>Xanthomonas</taxon>
    </lineage>
</organism>
<comment type="subcellular location">
    <subcellularLocation>
        <location evidence="1">Cell inner membrane</location>
        <topology evidence="1">Multi-pass membrane protein</topology>
    </subcellularLocation>
</comment>
<comment type="similarity">
    <text evidence="1">Belongs to the UPF0761 family.</text>
</comment>